<protein>
    <recommendedName>
        <fullName evidence="1">UPF0102 protein Dvul_2148</fullName>
    </recommendedName>
</protein>
<accession>A1VFE8</accession>
<name>Y2148_NITV4</name>
<proteinExistence type="inferred from homology"/>
<sequence length="134" mass="14851">MVDARHATGQHGEDEAAALLQRTGHRIIARNWRHGGLELDIICETGDTIVFVEVKTRAAHGLTSPTDALTHQKRHRLIRAARAWLAAADAWDRACRFDLVCVTQRGATCTLEHITDAFDLTETLGGGDTSWQPW</sequence>
<dbReference type="EMBL" id="CP000527">
    <property type="protein sequence ID" value="ABM29164.1"/>
    <property type="molecule type" value="Genomic_DNA"/>
</dbReference>
<dbReference type="RefSeq" id="WP_010938134.1">
    <property type="nucleotide sequence ID" value="NC_008751.1"/>
</dbReference>
<dbReference type="SMR" id="A1VFE8"/>
<dbReference type="KEGG" id="dvl:Dvul_2148"/>
<dbReference type="HOGENOM" id="CLU_115353_2_1_7"/>
<dbReference type="Proteomes" id="UP000009173">
    <property type="component" value="Chromosome"/>
</dbReference>
<dbReference type="GO" id="GO:0003676">
    <property type="term" value="F:nucleic acid binding"/>
    <property type="evidence" value="ECO:0007669"/>
    <property type="project" value="InterPro"/>
</dbReference>
<dbReference type="CDD" id="cd20736">
    <property type="entry name" value="PoNe_Nuclease"/>
    <property type="match status" value="1"/>
</dbReference>
<dbReference type="Gene3D" id="3.40.1350.10">
    <property type="match status" value="1"/>
</dbReference>
<dbReference type="HAMAP" id="MF_00048">
    <property type="entry name" value="UPF0102"/>
    <property type="match status" value="1"/>
</dbReference>
<dbReference type="InterPro" id="IPR011335">
    <property type="entry name" value="Restrct_endonuc-II-like"/>
</dbReference>
<dbReference type="InterPro" id="IPR011856">
    <property type="entry name" value="tRNA_endonuc-like_dom_sf"/>
</dbReference>
<dbReference type="InterPro" id="IPR003509">
    <property type="entry name" value="UPF0102_YraN-like"/>
</dbReference>
<dbReference type="NCBIfam" id="NF009150">
    <property type="entry name" value="PRK12497.1-3"/>
    <property type="match status" value="1"/>
</dbReference>
<dbReference type="NCBIfam" id="NF009154">
    <property type="entry name" value="PRK12497.3-3"/>
    <property type="match status" value="1"/>
</dbReference>
<dbReference type="NCBIfam" id="NF011273">
    <property type="entry name" value="PRK14680.1"/>
    <property type="match status" value="1"/>
</dbReference>
<dbReference type="NCBIfam" id="TIGR00252">
    <property type="entry name" value="YraN family protein"/>
    <property type="match status" value="1"/>
</dbReference>
<dbReference type="PANTHER" id="PTHR34039">
    <property type="entry name" value="UPF0102 PROTEIN YRAN"/>
    <property type="match status" value="1"/>
</dbReference>
<dbReference type="PANTHER" id="PTHR34039:SF1">
    <property type="entry name" value="UPF0102 PROTEIN YRAN"/>
    <property type="match status" value="1"/>
</dbReference>
<dbReference type="Pfam" id="PF02021">
    <property type="entry name" value="UPF0102"/>
    <property type="match status" value="1"/>
</dbReference>
<dbReference type="SUPFAM" id="SSF52980">
    <property type="entry name" value="Restriction endonuclease-like"/>
    <property type="match status" value="1"/>
</dbReference>
<comment type="similarity">
    <text evidence="1">Belongs to the UPF0102 family.</text>
</comment>
<gene>
    <name type="ordered locus">Dvul_2148</name>
</gene>
<organism>
    <name type="scientific">Nitratidesulfovibrio vulgaris (strain DP4)</name>
    <name type="common">Desulfovibrio vulgaris</name>
    <dbReference type="NCBI Taxonomy" id="391774"/>
    <lineage>
        <taxon>Bacteria</taxon>
        <taxon>Pseudomonadati</taxon>
        <taxon>Thermodesulfobacteriota</taxon>
        <taxon>Desulfovibrionia</taxon>
        <taxon>Desulfovibrionales</taxon>
        <taxon>Desulfovibrionaceae</taxon>
        <taxon>Nitratidesulfovibrio</taxon>
    </lineage>
</organism>
<reference key="1">
    <citation type="journal article" date="2009" name="Environ. Microbiol.">
        <title>Contribution of mobile genetic elements to Desulfovibrio vulgaris genome plasticity.</title>
        <authorList>
            <person name="Walker C.B."/>
            <person name="Stolyar S."/>
            <person name="Chivian D."/>
            <person name="Pinel N."/>
            <person name="Gabster J.A."/>
            <person name="Dehal P.S."/>
            <person name="He Z."/>
            <person name="Yang Z.K."/>
            <person name="Yen H.C."/>
            <person name="Zhou J."/>
            <person name="Wall J.D."/>
            <person name="Hazen T.C."/>
            <person name="Arkin A.P."/>
            <person name="Stahl D.A."/>
        </authorList>
    </citation>
    <scope>NUCLEOTIDE SEQUENCE [LARGE SCALE GENOMIC DNA]</scope>
    <source>
        <strain>DP4</strain>
    </source>
</reference>
<evidence type="ECO:0000255" key="1">
    <source>
        <dbReference type="HAMAP-Rule" id="MF_00048"/>
    </source>
</evidence>
<feature type="chain" id="PRO_1000009214" description="UPF0102 protein Dvul_2148">
    <location>
        <begin position="1"/>
        <end position="134"/>
    </location>
</feature>